<reference key="1">
    <citation type="journal article" date="1992" name="Oncogene">
        <title>Identification of genes differentially expressed in two types of v-myb-transformed avian myelomonocytic cells.</title>
        <authorList>
            <person name="Nakano T."/>
            <person name="Graf T."/>
        </authorList>
    </citation>
    <scope>NUCLEOTIDE SEQUENCE [MRNA]</scope>
    <source>
        <strain>White leghorn</strain>
        <tissue>Bone marrow</tissue>
    </source>
</reference>
<sequence>MSKGCQTQGPLSELEKAIDVIIDVFHQYSRREGDKDTLTRKELKLLIEKQLANYLKHVKNQVSIDQIFKDLDNNKDQQLSFGEVMLLIIRVTVATHEHLHFCEDHQQQHQHQHQHQHNH</sequence>
<proteinExistence type="evidence at transcript level"/>
<dbReference type="EMBL" id="X61200">
    <property type="status" value="NOT_ANNOTATED_CDS"/>
    <property type="molecule type" value="mRNA"/>
</dbReference>
<dbReference type="RefSeq" id="NP_001292080.1">
    <property type="nucleotide sequence ID" value="NM_001305151.2"/>
</dbReference>
<dbReference type="SMR" id="P28318"/>
<dbReference type="FunCoup" id="P28318">
    <property type="interactions" value="16"/>
</dbReference>
<dbReference type="STRING" id="9031.ENSGALP00000022671"/>
<dbReference type="PaxDb" id="9031-ENSGALP00000022671"/>
<dbReference type="Ensembl" id="ENSGALT00010068738.1">
    <property type="protein sequence ID" value="ENSGALP00010042231.1"/>
    <property type="gene ID" value="ENSGALG00010028370.1"/>
</dbReference>
<dbReference type="GeneID" id="426356"/>
<dbReference type="KEGG" id="gga:426356"/>
<dbReference type="CTD" id="6283"/>
<dbReference type="VEuPathDB" id="HostDB:geneid_426356"/>
<dbReference type="eggNOG" id="ENOG502SA01">
    <property type="taxonomic scope" value="Eukaryota"/>
</dbReference>
<dbReference type="GeneTree" id="ENSGT00940000162189"/>
<dbReference type="HOGENOM" id="CLU_138624_6_0_1"/>
<dbReference type="InParanoid" id="P28318"/>
<dbReference type="OMA" id="HEHLHEV"/>
<dbReference type="OrthoDB" id="26525at2759"/>
<dbReference type="PhylomeDB" id="P28318"/>
<dbReference type="TreeFam" id="TF332727"/>
<dbReference type="Reactome" id="R-GGA-5668599">
    <property type="pathway name" value="RHO GTPases Activate NADPH Oxidases"/>
</dbReference>
<dbReference type="Reactome" id="R-GGA-5686938">
    <property type="pathway name" value="Regulation of TLR by endogenous ligand"/>
</dbReference>
<dbReference type="Reactome" id="R-GGA-6798695">
    <property type="pathway name" value="Neutrophil degranulation"/>
</dbReference>
<dbReference type="Reactome" id="R-GGA-6799990">
    <property type="pathway name" value="Metal sequestration by antimicrobial proteins"/>
</dbReference>
<dbReference type="PRO" id="PR:P28318"/>
<dbReference type="Proteomes" id="UP000000539">
    <property type="component" value="Chromosome 25"/>
</dbReference>
<dbReference type="Bgee" id="ENSGALG00000024272">
    <property type="expression patterns" value="Expressed in granulocyte and 8 other cell types or tissues"/>
</dbReference>
<dbReference type="GO" id="GO:0005737">
    <property type="term" value="C:cytoplasm"/>
    <property type="evidence" value="ECO:0000318"/>
    <property type="project" value="GO_Central"/>
</dbReference>
<dbReference type="GO" id="GO:0005509">
    <property type="term" value="F:calcium ion binding"/>
    <property type="evidence" value="ECO:0000318"/>
    <property type="project" value="GO_Central"/>
</dbReference>
<dbReference type="GO" id="GO:0048306">
    <property type="term" value="F:calcium-dependent protein binding"/>
    <property type="evidence" value="ECO:0000318"/>
    <property type="project" value="GO_Central"/>
</dbReference>
<dbReference type="GO" id="GO:0043542">
    <property type="term" value="P:endothelial cell migration"/>
    <property type="evidence" value="ECO:0000318"/>
    <property type="project" value="GO_Central"/>
</dbReference>
<dbReference type="CDD" id="cd05030">
    <property type="entry name" value="calgranulins"/>
    <property type="match status" value="1"/>
</dbReference>
<dbReference type="Gene3D" id="1.10.238.10">
    <property type="entry name" value="EF-hand"/>
    <property type="match status" value="1"/>
</dbReference>
<dbReference type="InterPro" id="IPR011992">
    <property type="entry name" value="EF-hand-dom_pair"/>
</dbReference>
<dbReference type="InterPro" id="IPR018247">
    <property type="entry name" value="EF_Hand_1_Ca_BS"/>
</dbReference>
<dbReference type="InterPro" id="IPR002048">
    <property type="entry name" value="EF_hand_dom"/>
</dbReference>
<dbReference type="InterPro" id="IPR001751">
    <property type="entry name" value="S100/CaBP7/8-like_CS"/>
</dbReference>
<dbReference type="InterPro" id="IPR013787">
    <property type="entry name" value="S100_Ca-bd_sub"/>
</dbReference>
<dbReference type="PANTHER" id="PTHR11639:SF77">
    <property type="entry name" value="PROTEIN S100-A12"/>
    <property type="match status" value="1"/>
</dbReference>
<dbReference type="PANTHER" id="PTHR11639">
    <property type="entry name" value="S100 CALCIUM-BINDING PROTEIN"/>
    <property type="match status" value="1"/>
</dbReference>
<dbReference type="Pfam" id="PF01023">
    <property type="entry name" value="S_100"/>
    <property type="match status" value="1"/>
</dbReference>
<dbReference type="SMART" id="SM01394">
    <property type="entry name" value="S_100"/>
    <property type="match status" value="1"/>
</dbReference>
<dbReference type="SUPFAM" id="SSF47473">
    <property type="entry name" value="EF-hand"/>
    <property type="match status" value="1"/>
</dbReference>
<dbReference type="PROSITE" id="PS00018">
    <property type="entry name" value="EF_HAND_1"/>
    <property type="match status" value="1"/>
</dbReference>
<dbReference type="PROSITE" id="PS50222">
    <property type="entry name" value="EF_HAND_2"/>
    <property type="match status" value="1"/>
</dbReference>
<dbReference type="PROSITE" id="PS00303">
    <property type="entry name" value="S100_CABP"/>
    <property type="match status" value="1"/>
</dbReference>
<protein>
    <recommendedName>
        <fullName>Protein MRP-126</fullName>
    </recommendedName>
</protein>
<evidence type="ECO:0000255" key="1">
    <source>
        <dbReference type="PROSITE-ProRule" id="PRU00448"/>
    </source>
</evidence>
<evidence type="ECO:0000305" key="2"/>
<organism>
    <name type="scientific">Gallus gallus</name>
    <name type="common">Chicken</name>
    <dbReference type="NCBI Taxonomy" id="9031"/>
    <lineage>
        <taxon>Eukaryota</taxon>
        <taxon>Metazoa</taxon>
        <taxon>Chordata</taxon>
        <taxon>Craniata</taxon>
        <taxon>Vertebrata</taxon>
        <taxon>Euteleostomi</taxon>
        <taxon>Archelosauria</taxon>
        <taxon>Archosauria</taxon>
        <taxon>Dinosauria</taxon>
        <taxon>Saurischia</taxon>
        <taxon>Theropoda</taxon>
        <taxon>Coelurosauria</taxon>
        <taxon>Aves</taxon>
        <taxon>Neognathae</taxon>
        <taxon>Galloanserae</taxon>
        <taxon>Galliformes</taxon>
        <taxon>Phasianidae</taxon>
        <taxon>Phasianinae</taxon>
        <taxon>Gallus</taxon>
    </lineage>
</organism>
<keyword id="KW-0106">Calcium</keyword>
<keyword id="KW-0479">Metal-binding</keyword>
<keyword id="KW-1185">Reference proteome</keyword>
<keyword id="KW-0677">Repeat</keyword>
<accession>P28318</accession>
<comment type="tissue specificity">
    <text>Expressed in v-myb-transformed myelomonocytic cells.</text>
</comment>
<comment type="similarity">
    <text evidence="2">Belongs to the S-100 family.</text>
</comment>
<feature type="chain" id="PRO_0000144025" description="Protein MRP-126">
    <location>
        <begin position="1"/>
        <end position="119"/>
    </location>
</feature>
<feature type="domain" description="EF-hand 1" evidence="2">
    <location>
        <begin position="23"/>
        <end position="58"/>
    </location>
</feature>
<feature type="domain" description="EF-hand 2" evidence="1">
    <location>
        <begin position="59"/>
        <end position="94"/>
    </location>
</feature>
<feature type="binding site" evidence="2">
    <location>
        <position position="37"/>
    </location>
    <ligand>
        <name>Ca(2+)</name>
        <dbReference type="ChEBI" id="CHEBI:29108"/>
        <label>1</label>
        <note>low affinity</note>
    </ligand>
</feature>
<feature type="binding site" evidence="2">
    <location>
        <position position="42"/>
    </location>
    <ligand>
        <name>Ca(2+)</name>
        <dbReference type="ChEBI" id="CHEBI:29108"/>
        <label>1</label>
        <note>low affinity</note>
    </ligand>
</feature>
<feature type="binding site" evidence="1">
    <location>
        <position position="72"/>
    </location>
    <ligand>
        <name>Ca(2+)</name>
        <dbReference type="ChEBI" id="CHEBI:29108"/>
        <label>2</label>
        <note>high affinity</note>
    </ligand>
</feature>
<feature type="binding site" evidence="1">
    <location>
        <position position="74"/>
    </location>
    <ligand>
        <name>Ca(2+)</name>
        <dbReference type="ChEBI" id="CHEBI:29108"/>
        <label>2</label>
        <note>high affinity</note>
    </ligand>
</feature>
<feature type="binding site" evidence="1">
    <location>
        <position position="76"/>
    </location>
    <ligand>
        <name>Ca(2+)</name>
        <dbReference type="ChEBI" id="CHEBI:29108"/>
        <label>2</label>
        <note>high affinity</note>
    </ligand>
</feature>
<feature type="binding site" evidence="1">
    <location>
        <position position="78"/>
    </location>
    <ligand>
        <name>Ca(2+)</name>
        <dbReference type="ChEBI" id="CHEBI:29108"/>
        <label>2</label>
        <note>high affinity</note>
    </ligand>
</feature>
<feature type="binding site" evidence="1">
    <location>
        <position position="83"/>
    </location>
    <ligand>
        <name>Ca(2+)</name>
        <dbReference type="ChEBI" id="CHEBI:29108"/>
        <label>2</label>
        <note>high affinity</note>
    </ligand>
</feature>
<name>M126_CHICK</name>